<feature type="chain" id="PRO_0000133101" description="Replication protein E1">
    <location>
        <begin position="1"/>
        <end position="606"/>
    </location>
</feature>
<feature type="domain" description="SF3 helicase" evidence="1">
    <location>
        <begin position="408"/>
        <end position="558"/>
    </location>
</feature>
<feature type="region of interest" description="DNA-binding region" evidence="1">
    <location>
        <begin position="146"/>
        <end position="309"/>
    </location>
</feature>
<feature type="region of interest" description="Disordered" evidence="2">
    <location>
        <begin position="581"/>
        <end position="606"/>
    </location>
</feature>
<feature type="short sequence motif" description="Nuclear localization signal" evidence="1">
    <location>
        <begin position="78"/>
        <end position="80"/>
    </location>
</feature>
<feature type="short sequence motif" description="Nuclear export signal" evidence="1">
    <location>
        <begin position="90"/>
        <end position="99"/>
    </location>
</feature>
<feature type="compositionally biased region" description="Polar residues" evidence="2">
    <location>
        <begin position="593"/>
        <end position="606"/>
    </location>
</feature>
<feature type="binding site" evidence="1">
    <location>
        <begin position="434"/>
        <end position="441"/>
    </location>
    <ligand>
        <name>ATP</name>
        <dbReference type="ChEBI" id="CHEBI:30616"/>
    </ligand>
</feature>
<feature type="modified residue" description="Phosphoserine; by host" evidence="1">
    <location>
        <position position="83"/>
    </location>
</feature>
<feature type="modified residue" description="Phosphoserine; by host" evidence="1">
    <location>
        <position position="91"/>
    </location>
</feature>
<feature type="cross-link" description="Glycyl lysine isopeptide (Lys-Gly) (interchain with G-Cter in SUMO)" evidence="1">
    <location>
        <position position="515"/>
    </location>
</feature>
<organism>
    <name type="scientific">Human papillomavirus 5</name>
    <dbReference type="NCBI Taxonomy" id="333923"/>
    <lineage>
        <taxon>Viruses</taxon>
        <taxon>Monodnaviria</taxon>
        <taxon>Shotokuvirae</taxon>
        <taxon>Cossaviricota</taxon>
        <taxon>Papovaviricetes</taxon>
        <taxon>Zurhausenvirales</taxon>
        <taxon>Papillomaviridae</taxon>
        <taxon>Firstpapillomavirinae</taxon>
        <taxon>Betapapillomavirus</taxon>
        <taxon>Betapapillomavirus 1</taxon>
    </lineage>
</organism>
<gene>
    <name evidence="1" type="primary">E1</name>
</gene>
<sequence>MTDPNSKGSTSKEGFGDWCLLEADCSDVENDLGQLFERDTDSDISDLLDDTELEQGNSLELFHQQECEQSEEQLQKLKRKYLSPKAVAQLSPRLESISLSPQQKSKRRLFAEQDSGLELTLNNEAEDVTPEVEVPAIDSRPDDEGGSGDVDIHYTALLRSSNKKATLMAKFKESFGVGFNELTRQFKSHKTCCKDWVVSVYAVHDDLFESSKQLLQQHCDYIWVRGIGAMSLYLLCFKAGKNRGTVHKLITSMLNVHEQQILSEPPKLRNTAAALFWYKGCMGSGAFSHGPYPDWIAQQTILGHKSAEASTFDFSAMVQWAFHNHLLDEADIAYQYARLAPEDANAVAWLAHNNQAKFVRECAYMVRFYKKGQMRDMSISEWIYTKINEVEGEGHWSDIVKFIRYQNINFIVFLTALKEFLHSVPKKNCILIYGPPNSGKSSFAMSLIRVLKGRVLSFVNSKSQFWLQPLSECKIALLDDVTDPCWIYMDTYLRNGLDGHYVSLDCKYRAPTQMKFPPLLLTSNINVHGETNYRYLHTTIKGFEFPNPFPMKADNTPQFELTDQSWKSFFTRLWTQLDLSDQEEEGEDGESQRAFQCSARSANEHL</sequence>
<dbReference type="EC" id="5.6.2.4" evidence="1"/>
<dbReference type="EMBL" id="M17463">
    <property type="protein sequence ID" value="AAA46985.1"/>
    <property type="molecule type" value="Genomic_DNA"/>
</dbReference>
<dbReference type="PIR" id="C26277">
    <property type="entry name" value="W1WL5"/>
</dbReference>
<dbReference type="RefSeq" id="NP_041367.1">
    <property type="nucleotide sequence ID" value="NC_001531.1"/>
</dbReference>
<dbReference type="SMR" id="P06920"/>
<dbReference type="GeneID" id="1489049"/>
<dbReference type="KEGG" id="vg:1489049"/>
<dbReference type="OrthoDB" id="4795at10239"/>
<dbReference type="Proteomes" id="UP000009252">
    <property type="component" value="Genome"/>
</dbReference>
<dbReference type="GO" id="GO:0042025">
    <property type="term" value="C:host cell nucleus"/>
    <property type="evidence" value="ECO:0007669"/>
    <property type="project" value="UniProtKB-SubCell"/>
</dbReference>
<dbReference type="GO" id="GO:0005524">
    <property type="term" value="F:ATP binding"/>
    <property type="evidence" value="ECO:0007669"/>
    <property type="project" value="UniProtKB-UniRule"/>
</dbReference>
<dbReference type="GO" id="GO:0016887">
    <property type="term" value="F:ATP hydrolysis activity"/>
    <property type="evidence" value="ECO:0007669"/>
    <property type="project" value="RHEA"/>
</dbReference>
<dbReference type="GO" id="GO:0003677">
    <property type="term" value="F:DNA binding"/>
    <property type="evidence" value="ECO:0007669"/>
    <property type="project" value="UniProtKB-UniRule"/>
</dbReference>
<dbReference type="GO" id="GO:0003678">
    <property type="term" value="F:DNA helicase activity"/>
    <property type="evidence" value="ECO:0007669"/>
    <property type="project" value="UniProtKB-UniRule"/>
</dbReference>
<dbReference type="GO" id="GO:0006260">
    <property type="term" value="P:DNA replication"/>
    <property type="evidence" value="ECO:0007669"/>
    <property type="project" value="UniProtKB-UniRule"/>
</dbReference>
<dbReference type="Gene3D" id="3.40.1310.10">
    <property type="match status" value="1"/>
</dbReference>
<dbReference type="Gene3D" id="3.40.50.300">
    <property type="entry name" value="P-loop containing nucleotide triphosphate hydrolases"/>
    <property type="match status" value="1"/>
</dbReference>
<dbReference type="Gene3D" id="1.10.10.510">
    <property type="entry name" value="Zinc finger, large T-antigen D1 domain"/>
    <property type="match status" value="1"/>
</dbReference>
<dbReference type="HAMAP" id="MF_04000">
    <property type="entry name" value="PPV_E1"/>
    <property type="match status" value="1"/>
</dbReference>
<dbReference type="InterPro" id="IPR014015">
    <property type="entry name" value="Helicase_SF3_DNA-vir"/>
</dbReference>
<dbReference type="InterPro" id="IPR027417">
    <property type="entry name" value="P-loop_NTPase"/>
</dbReference>
<dbReference type="InterPro" id="IPR001177">
    <property type="entry name" value="PPV_DNA_helicase_E1_C"/>
</dbReference>
<dbReference type="InterPro" id="IPR014000">
    <property type="entry name" value="PPV_DNA_helicase_E1_N"/>
</dbReference>
<dbReference type="InterPro" id="IPR046832">
    <property type="entry name" value="PPV_E1_DBD"/>
</dbReference>
<dbReference type="InterPro" id="IPR046935">
    <property type="entry name" value="PPV_E1_DBD_sf"/>
</dbReference>
<dbReference type="InterPro" id="IPR016393">
    <property type="entry name" value="Rep_E1_papillomaV"/>
</dbReference>
<dbReference type="InterPro" id="IPR037102">
    <property type="entry name" value="Znf_lg_T-Ag_D1_dom_sf"/>
</dbReference>
<dbReference type="Pfam" id="PF00519">
    <property type="entry name" value="PPV_E1_C"/>
    <property type="match status" value="1"/>
</dbReference>
<dbReference type="Pfam" id="PF20450">
    <property type="entry name" value="PPV_E1_DBD"/>
    <property type="match status" value="1"/>
</dbReference>
<dbReference type="Pfam" id="PF00524">
    <property type="entry name" value="PPV_E1_N"/>
    <property type="match status" value="1"/>
</dbReference>
<dbReference type="PIRSF" id="PIRSF003383">
    <property type="entry name" value="Rep_E1_papillomaV"/>
    <property type="match status" value="1"/>
</dbReference>
<dbReference type="SUPFAM" id="SSF55464">
    <property type="entry name" value="Origin of replication-binding domain, RBD-like"/>
    <property type="match status" value="1"/>
</dbReference>
<dbReference type="SUPFAM" id="SSF52540">
    <property type="entry name" value="P-loop containing nucleoside triphosphate hydrolases"/>
    <property type="match status" value="1"/>
</dbReference>
<dbReference type="PROSITE" id="PS51206">
    <property type="entry name" value="SF3_HELICASE_1"/>
    <property type="match status" value="1"/>
</dbReference>
<accession>P06920</accession>
<keyword id="KW-0067">ATP-binding</keyword>
<keyword id="KW-0235">DNA replication</keyword>
<keyword id="KW-0238">DNA-binding</keyword>
<keyword id="KW-0244">Early protein</keyword>
<keyword id="KW-0347">Helicase</keyword>
<keyword id="KW-1048">Host nucleus</keyword>
<keyword id="KW-0378">Hydrolase</keyword>
<keyword id="KW-0413">Isomerase</keyword>
<keyword id="KW-1017">Isopeptide bond</keyword>
<keyword id="KW-0547">Nucleotide-binding</keyword>
<keyword id="KW-0597">Phosphoprotein</keyword>
<keyword id="KW-1185">Reference proteome</keyword>
<keyword id="KW-0832">Ubl conjugation</keyword>
<reference key="1">
    <citation type="journal article" date="1987" name="Virology">
        <title>Nucleotide sequence and genome organization of human papillomavirus type 5.</title>
        <authorList>
            <person name="Zachow K.R."/>
            <person name="Ostrow R.S."/>
            <person name="Faras A.J."/>
        </authorList>
    </citation>
    <scope>NUCLEOTIDE SEQUENCE [GENOMIC DNA]</scope>
</reference>
<organismHost>
    <name type="scientific">Homo sapiens</name>
    <name type="common">Human</name>
    <dbReference type="NCBI Taxonomy" id="9606"/>
</organismHost>
<comment type="function">
    <text evidence="1">ATP-dependent DNA 3'-5' helicase required for initiation of viral DNA replication. It forms a complex with the viral E2 protein. The E1-E2 complex binds to the replication origin which contains binding sites for both proteins. During the initial step, a dimer of E1 interacts with a dimer of protein E2 leading to a complex that binds the viral origin of replication with high specificity. Then, a second dimer of E1 displaces the E2 dimer in an ATP-dependent manner to form the E1 tetramer. Following this, two E1 monomers are added to each half of the site, which results in the formation of two E1 trimers on the viral ori. Subsequently, two hexamers will be created. The double hexamer acts as a bi-directional helicase machinery and unwinds the viral DNA and then recruits the host DNA polymerase to start replication.</text>
</comment>
<comment type="catalytic activity">
    <reaction evidence="1">
        <text>Couples ATP hydrolysis with the unwinding of duplex DNA by translocating in the 3'-5' direction.</text>
        <dbReference type="EC" id="5.6.2.4"/>
    </reaction>
</comment>
<comment type="catalytic activity">
    <reaction evidence="1">
        <text>ATP + H2O = ADP + phosphate + H(+)</text>
        <dbReference type="Rhea" id="RHEA:13065"/>
        <dbReference type="ChEBI" id="CHEBI:15377"/>
        <dbReference type="ChEBI" id="CHEBI:15378"/>
        <dbReference type="ChEBI" id="CHEBI:30616"/>
        <dbReference type="ChEBI" id="CHEBI:43474"/>
        <dbReference type="ChEBI" id="CHEBI:456216"/>
        <dbReference type="EC" id="5.6.2.4"/>
    </reaction>
</comment>
<comment type="subunit">
    <text evidence="1">Can form hexamers. Interacts with E2 protein; this interaction increases E1 DNA binding specificity. Interacts with host DNA polymerase subunit POLA2. Interacts with host single stranded DNA-binding protein RPA1. Interacts with host TOP1; this interaction stimulates the enzymatic activity of TOP1.</text>
</comment>
<comment type="subcellular location">
    <subcellularLocation>
        <location evidence="1">Host nucleus</location>
    </subcellularLocation>
</comment>
<comment type="PTM">
    <text evidence="1">Phosphorylated.</text>
</comment>
<comment type="PTM">
    <text evidence="1">Sumoylated.</text>
</comment>
<comment type="similarity">
    <text evidence="1">Belongs to the papillomaviridae E1 protein family.</text>
</comment>
<name>VE1_HPV05</name>
<evidence type="ECO:0000255" key="1">
    <source>
        <dbReference type="HAMAP-Rule" id="MF_04000"/>
    </source>
</evidence>
<evidence type="ECO:0000256" key="2">
    <source>
        <dbReference type="SAM" id="MobiDB-lite"/>
    </source>
</evidence>
<proteinExistence type="inferred from homology"/>
<protein>
    <recommendedName>
        <fullName evidence="1">Replication protein E1</fullName>
        <ecNumber evidence="1">5.6.2.4</ecNumber>
    </recommendedName>
    <alternativeName>
        <fullName evidence="1">ATP-dependent helicase E1</fullName>
    </alternativeName>
    <alternativeName>
        <fullName evidence="1">DNA 3'-5' helicase E1</fullName>
    </alternativeName>
</protein>